<comment type="function">
    <text evidence="1">Involved in peptide bond synthesis. Alleviates ribosome stalling that occurs when 3 or more consecutive Pro residues or the sequence PPG is present in a protein, possibly by augmenting the peptidyl transferase activity of the ribosome. Modification of Lys-34 is required for alleviation.</text>
</comment>
<comment type="pathway">
    <text evidence="1">Protein biosynthesis; polypeptide chain elongation.</text>
</comment>
<comment type="subcellular location">
    <subcellularLocation>
        <location evidence="1">Cytoplasm</location>
    </subcellularLocation>
</comment>
<comment type="PTM">
    <text evidence="1">Is beta-lysylated on the epsilon-amino group of Lys-34 by the combined action of EpmA and EpmB, and then hydroxylated on the C5 position of the same residue by EpmC. Lysylation is critical for the stimulatory effect of EF-P on peptide-bond formation. The lysylation moiety would extend toward the peptidyltransferase center and stabilize the terminal 3-CCA end of the tRNA. The hydroxylation of the C5 position on Lys-34 would allow additional potential stabilizing hydrogen-bond interactions with the P-tRNA.</text>
</comment>
<comment type="similarity">
    <text evidence="1">Belongs to the elongation factor P family.</text>
</comment>
<organism>
    <name type="scientific">Shigella sonnei (strain Ss046)</name>
    <dbReference type="NCBI Taxonomy" id="300269"/>
    <lineage>
        <taxon>Bacteria</taxon>
        <taxon>Pseudomonadati</taxon>
        <taxon>Pseudomonadota</taxon>
        <taxon>Gammaproteobacteria</taxon>
        <taxon>Enterobacterales</taxon>
        <taxon>Enterobacteriaceae</taxon>
        <taxon>Shigella</taxon>
    </lineage>
</organism>
<keyword id="KW-0963">Cytoplasm</keyword>
<keyword id="KW-0251">Elongation factor</keyword>
<keyword id="KW-0379">Hydroxylation</keyword>
<keyword id="KW-0648">Protein biosynthesis</keyword>
<keyword id="KW-1185">Reference proteome</keyword>
<protein>
    <recommendedName>
        <fullName evidence="1">Elongation factor P</fullName>
        <shortName evidence="1">EF-P</shortName>
    </recommendedName>
</protein>
<proteinExistence type="inferred from homology"/>
<sequence length="188" mass="20591">MATYYSNDFRAGLKIMLDGEPYAVEASEFVKPGKGQAFARVKLRRLLTGTRVEKTFKSTDSAEGADVVDMNLTYLYNDGEFWHFMNNETFEQLSADAKAIGDNAKWLLDQAECIVTLWNGQPISVTPPNFVELEIVDTDPGLKGDTAGTGGKPATLSTGAVVKVPLFVQIGEVIKVDTRSGEYVSRVK</sequence>
<name>EFP_SHISS</name>
<gene>
    <name evidence="1" type="primary">efp</name>
    <name type="ordered locus">SSON_4331</name>
</gene>
<reference key="1">
    <citation type="journal article" date="2005" name="Nucleic Acids Res.">
        <title>Genome dynamics and diversity of Shigella species, the etiologic agents of bacillary dysentery.</title>
        <authorList>
            <person name="Yang F."/>
            <person name="Yang J."/>
            <person name="Zhang X."/>
            <person name="Chen L."/>
            <person name="Jiang Y."/>
            <person name="Yan Y."/>
            <person name="Tang X."/>
            <person name="Wang J."/>
            <person name="Xiong Z."/>
            <person name="Dong J."/>
            <person name="Xue Y."/>
            <person name="Zhu Y."/>
            <person name="Xu X."/>
            <person name="Sun L."/>
            <person name="Chen S."/>
            <person name="Nie H."/>
            <person name="Peng J."/>
            <person name="Xu J."/>
            <person name="Wang Y."/>
            <person name="Yuan Z."/>
            <person name="Wen Y."/>
            <person name="Yao Z."/>
            <person name="Shen Y."/>
            <person name="Qiang B."/>
            <person name="Hou Y."/>
            <person name="Yu J."/>
            <person name="Jin Q."/>
        </authorList>
    </citation>
    <scope>NUCLEOTIDE SEQUENCE [LARGE SCALE GENOMIC DNA]</scope>
    <source>
        <strain>Ss046</strain>
    </source>
</reference>
<evidence type="ECO:0000255" key="1">
    <source>
        <dbReference type="HAMAP-Rule" id="MF_00141"/>
    </source>
</evidence>
<feature type="chain" id="PRO_1000010858" description="Elongation factor P">
    <location>
        <begin position="1"/>
        <end position="188"/>
    </location>
</feature>
<feature type="modified residue" description="N6-(3,6-diaminohexanoyl)-5-hydroxylysine" evidence="1">
    <location>
        <position position="34"/>
    </location>
</feature>
<dbReference type="EMBL" id="CP000038">
    <property type="protein sequence ID" value="AAZ90820.1"/>
    <property type="molecule type" value="Genomic_DNA"/>
</dbReference>
<dbReference type="RefSeq" id="WP_000257278.1">
    <property type="nucleotide sequence ID" value="NC_007384.1"/>
</dbReference>
<dbReference type="SMR" id="Q3YUJ2"/>
<dbReference type="GeneID" id="93777677"/>
<dbReference type="KEGG" id="ssn:SSON_4331"/>
<dbReference type="HOGENOM" id="CLU_074944_0_0_6"/>
<dbReference type="UniPathway" id="UPA00345"/>
<dbReference type="Proteomes" id="UP000002529">
    <property type="component" value="Chromosome"/>
</dbReference>
<dbReference type="GO" id="GO:0005829">
    <property type="term" value="C:cytosol"/>
    <property type="evidence" value="ECO:0007669"/>
    <property type="project" value="UniProtKB-ARBA"/>
</dbReference>
<dbReference type="GO" id="GO:0003746">
    <property type="term" value="F:translation elongation factor activity"/>
    <property type="evidence" value="ECO:0007669"/>
    <property type="project" value="UniProtKB-UniRule"/>
</dbReference>
<dbReference type="GO" id="GO:0043043">
    <property type="term" value="P:peptide biosynthetic process"/>
    <property type="evidence" value="ECO:0007669"/>
    <property type="project" value="InterPro"/>
</dbReference>
<dbReference type="CDD" id="cd04470">
    <property type="entry name" value="S1_EF-P_repeat_1"/>
    <property type="match status" value="1"/>
</dbReference>
<dbReference type="CDD" id="cd05794">
    <property type="entry name" value="S1_EF-P_repeat_2"/>
    <property type="match status" value="1"/>
</dbReference>
<dbReference type="FunFam" id="2.30.30.30:FF:000003">
    <property type="entry name" value="Elongation factor P"/>
    <property type="match status" value="1"/>
</dbReference>
<dbReference type="FunFam" id="2.40.50.140:FF:000004">
    <property type="entry name" value="Elongation factor P"/>
    <property type="match status" value="1"/>
</dbReference>
<dbReference type="FunFam" id="2.40.50.140:FF:000009">
    <property type="entry name" value="Elongation factor P"/>
    <property type="match status" value="1"/>
</dbReference>
<dbReference type="Gene3D" id="2.30.30.30">
    <property type="match status" value="1"/>
</dbReference>
<dbReference type="Gene3D" id="2.40.50.140">
    <property type="entry name" value="Nucleic acid-binding proteins"/>
    <property type="match status" value="2"/>
</dbReference>
<dbReference type="HAMAP" id="MF_00141">
    <property type="entry name" value="EF_P"/>
    <property type="match status" value="1"/>
</dbReference>
<dbReference type="InterPro" id="IPR015365">
    <property type="entry name" value="Elong-fact-P_C"/>
</dbReference>
<dbReference type="InterPro" id="IPR012340">
    <property type="entry name" value="NA-bd_OB-fold"/>
</dbReference>
<dbReference type="InterPro" id="IPR014722">
    <property type="entry name" value="Rib_uL2_dom2"/>
</dbReference>
<dbReference type="InterPro" id="IPR020599">
    <property type="entry name" value="Transl_elong_fac_P/YeiP"/>
</dbReference>
<dbReference type="InterPro" id="IPR013185">
    <property type="entry name" value="Transl_elong_KOW-like"/>
</dbReference>
<dbReference type="InterPro" id="IPR001059">
    <property type="entry name" value="Transl_elong_P/YeiP_cen"/>
</dbReference>
<dbReference type="InterPro" id="IPR013852">
    <property type="entry name" value="Transl_elong_P/YeiP_CS"/>
</dbReference>
<dbReference type="InterPro" id="IPR011768">
    <property type="entry name" value="Transl_elongation_fac_P"/>
</dbReference>
<dbReference type="InterPro" id="IPR008991">
    <property type="entry name" value="Translation_prot_SH3-like_sf"/>
</dbReference>
<dbReference type="NCBIfam" id="TIGR00038">
    <property type="entry name" value="efp"/>
    <property type="match status" value="1"/>
</dbReference>
<dbReference type="NCBIfam" id="NF001810">
    <property type="entry name" value="PRK00529.1"/>
    <property type="match status" value="1"/>
</dbReference>
<dbReference type="PANTHER" id="PTHR30053">
    <property type="entry name" value="ELONGATION FACTOR P"/>
    <property type="match status" value="1"/>
</dbReference>
<dbReference type="PANTHER" id="PTHR30053:SF12">
    <property type="entry name" value="ELONGATION FACTOR P (EF-P) FAMILY PROTEIN"/>
    <property type="match status" value="1"/>
</dbReference>
<dbReference type="Pfam" id="PF01132">
    <property type="entry name" value="EFP"/>
    <property type="match status" value="1"/>
</dbReference>
<dbReference type="Pfam" id="PF08207">
    <property type="entry name" value="EFP_N"/>
    <property type="match status" value="1"/>
</dbReference>
<dbReference type="Pfam" id="PF09285">
    <property type="entry name" value="Elong-fact-P_C"/>
    <property type="match status" value="1"/>
</dbReference>
<dbReference type="PIRSF" id="PIRSF005901">
    <property type="entry name" value="EF-P"/>
    <property type="match status" value="1"/>
</dbReference>
<dbReference type="SMART" id="SM01185">
    <property type="entry name" value="EFP"/>
    <property type="match status" value="1"/>
</dbReference>
<dbReference type="SMART" id="SM00841">
    <property type="entry name" value="Elong-fact-P_C"/>
    <property type="match status" value="1"/>
</dbReference>
<dbReference type="SUPFAM" id="SSF50249">
    <property type="entry name" value="Nucleic acid-binding proteins"/>
    <property type="match status" value="2"/>
</dbReference>
<dbReference type="SUPFAM" id="SSF50104">
    <property type="entry name" value="Translation proteins SH3-like domain"/>
    <property type="match status" value="1"/>
</dbReference>
<dbReference type="PROSITE" id="PS01275">
    <property type="entry name" value="EFP"/>
    <property type="match status" value="1"/>
</dbReference>
<accession>Q3YUJ2</accession>